<evidence type="ECO:0000255" key="1">
    <source>
        <dbReference type="HAMAP-Rule" id="MF_01007"/>
    </source>
</evidence>
<keyword id="KW-0963">Cytoplasm</keyword>
<keyword id="KW-0489">Methyltransferase</keyword>
<keyword id="KW-0698">rRNA processing</keyword>
<keyword id="KW-0949">S-adenosyl-L-methionine</keyword>
<keyword id="KW-0808">Transferase</keyword>
<name>RSMH_RHILO</name>
<gene>
    <name evidence="1" type="primary">rsmH</name>
    <name type="synonym">mraW</name>
    <name type="ordered locus">mll1565</name>
</gene>
<comment type="function">
    <text evidence="1">Specifically methylates the N4 position of cytidine in position 1402 (C1402) of 16S rRNA.</text>
</comment>
<comment type="catalytic activity">
    <reaction evidence="1">
        <text>cytidine(1402) in 16S rRNA + S-adenosyl-L-methionine = N(4)-methylcytidine(1402) in 16S rRNA + S-adenosyl-L-homocysteine + H(+)</text>
        <dbReference type="Rhea" id="RHEA:42928"/>
        <dbReference type="Rhea" id="RHEA-COMP:10286"/>
        <dbReference type="Rhea" id="RHEA-COMP:10287"/>
        <dbReference type="ChEBI" id="CHEBI:15378"/>
        <dbReference type="ChEBI" id="CHEBI:57856"/>
        <dbReference type="ChEBI" id="CHEBI:59789"/>
        <dbReference type="ChEBI" id="CHEBI:74506"/>
        <dbReference type="ChEBI" id="CHEBI:82748"/>
        <dbReference type="EC" id="2.1.1.199"/>
    </reaction>
</comment>
<comment type="subcellular location">
    <subcellularLocation>
        <location evidence="1">Cytoplasm</location>
    </subcellularLocation>
</comment>
<comment type="similarity">
    <text evidence="1">Belongs to the methyltransferase superfamily. RsmH family.</text>
</comment>
<protein>
    <recommendedName>
        <fullName evidence="1">Ribosomal RNA small subunit methyltransferase H</fullName>
        <ecNumber evidence="1">2.1.1.199</ecNumber>
    </recommendedName>
    <alternativeName>
        <fullName evidence="1">16S rRNA m(4)C1402 methyltransferase</fullName>
    </alternativeName>
    <alternativeName>
        <fullName evidence="1">rRNA (cytosine-N(4)-)-methyltransferase RsmH</fullName>
    </alternativeName>
</protein>
<feature type="chain" id="PRO_0000108689" description="Ribosomal RNA small subunit methyltransferase H">
    <location>
        <begin position="1"/>
        <end position="338"/>
    </location>
</feature>
<feature type="binding site" evidence="1">
    <location>
        <begin position="46"/>
        <end position="48"/>
    </location>
    <ligand>
        <name>S-adenosyl-L-methionine</name>
        <dbReference type="ChEBI" id="CHEBI:59789"/>
    </ligand>
</feature>
<feature type="binding site" evidence="1">
    <location>
        <position position="63"/>
    </location>
    <ligand>
        <name>S-adenosyl-L-methionine</name>
        <dbReference type="ChEBI" id="CHEBI:59789"/>
    </ligand>
</feature>
<feature type="binding site" evidence="1">
    <location>
        <position position="90"/>
    </location>
    <ligand>
        <name>S-adenosyl-L-methionine</name>
        <dbReference type="ChEBI" id="CHEBI:59789"/>
    </ligand>
</feature>
<feature type="binding site" evidence="1">
    <location>
        <position position="106"/>
    </location>
    <ligand>
        <name>S-adenosyl-L-methionine</name>
        <dbReference type="ChEBI" id="CHEBI:59789"/>
    </ligand>
</feature>
<feature type="binding site" evidence="1">
    <location>
        <position position="113"/>
    </location>
    <ligand>
        <name>S-adenosyl-L-methionine</name>
        <dbReference type="ChEBI" id="CHEBI:59789"/>
    </ligand>
</feature>
<reference key="1">
    <citation type="journal article" date="2000" name="DNA Res.">
        <title>Complete genome structure of the nitrogen-fixing symbiotic bacterium Mesorhizobium loti.</title>
        <authorList>
            <person name="Kaneko T."/>
            <person name="Nakamura Y."/>
            <person name="Sato S."/>
            <person name="Asamizu E."/>
            <person name="Kato T."/>
            <person name="Sasamoto S."/>
            <person name="Watanabe A."/>
            <person name="Idesawa K."/>
            <person name="Ishikawa A."/>
            <person name="Kawashima K."/>
            <person name="Kimura T."/>
            <person name="Kishida Y."/>
            <person name="Kiyokawa C."/>
            <person name="Kohara M."/>
            <person name="Matsumoto M."/>
            <person name="Matsuno A."/>
            <person name="Mochizuki Y."/>
            <person name="Nakayama S."/>
            <person name="Nakazaki N."/>
            <person name="Shimpo S."/>
            <person name="Sugimoto M."/>
            <person name="Takeuchi C."/>
            <person name="Yamada M."/>
            <person name="Tabata S."/>
        </authorList>
    </citation>
    <scope>NUCLEOTIDE SEQUENCE [LARGE SCALE GENOMIC DNA]</scope>
    <source>
        <strain>LMG 29417 / CECT 9101 / MAFF 303099</strain>
    </source>
</reference>
<proteinExistence type="inferred from homology"/>
<sequence length="338" mass="36064">MTVGDGDDIHAVGGSVRHIPVLLGEVLEALAPAERDIIIDGTFGAGGYTRAILATGASVVAIDRDPDAIAAGRDLEVQSGGRLRLVQAPFSTLDEHVESADGVVLDIGVSSMQLDQAERGFSFRFDGPLDMRMAQAGLSAADVVNSFKPGDLARIFGFLGEERHAGRIARMIEARREKKPFEGTLELADAIETHIGRAPKDKIHPATRVFQALRIYVNDELGELAKALFAAERALKPGGRLVVVTFHSLEDRIVKRFIADRADVATGSRHLPEAQARTATFRKAGGGVTAGDAEVAANPRARSARLRAAIRTEAPARAGDFSIFGLPKLPGIDRPGER</sequence>
<accession>Q98KA5</accession>
<dbReference type="EC" id="2.1.1.199" evidence="1"/>
<dbReference type="EMBL" id="BA000012">
    <property type="protein sequence ID" value="BAB48909.1"/>
    <property type="molecule type" value="Genomic_DNA"/>
</dbReference>
<dbReference type="RefSeq" id="WP_010910262.1">
    <property type="nucleotide sequence ID" value="NC_002678.2"/>
</dbReference>
<dbReference type="SMR" id="Q98KA5"/>
<dbReference type="KEGG" id="mlo:mll1565"/>
<dbReference type="PATRIC" id="fig|266835.9.peg.1260"/>
<dbReference type="eggNOG" id="COG0275">
    <property type="taxonomic scope" value="Bacteria"/>
</dbReference>
<dbReference type="HOGENOM" id="CLU_038422_1_1_5"/>
<dbReference type="Proteomes" id="UP000000552">
    <property type="component" value="Chromosome"/>
</dbReference>
<dbReference type="GO" id="GO:0005737">
    <property type="term" value="C:cytoplasm"/>
    <property type="evidence" value="ECO:0007669"/>
    <property type="project" value="UniProtKB-SubCell"/>
</dbReference>
<dbReference type="GO" id="GO:0071424">
    <property type="term" value="F:rRNA (cytosine-N4-)-methyltransferase activity"/>
    <property type="evidence" value="ECO:0007669"/>
    <property type="project" value="UniProtKB-UniRule"/>
</dbReference>
<dbReference type="GO" id="GO:0070475">
    <property type="term" value="P:rRNA base methylation"/>
    <property type="evidence" value="ECO:0007669"/>
    <property type="project" value="UniProtKB-UniRule"/>
</dbReference>
<dbReference type="CDD" id="cd02440">
    <property type="entry name" value="AdoMet_MTases"/>
    <property type="match status" value="1"/>
</dbReference>
<dbReference type="Gene3D" id="1.10.150.170">
    <property type="entry name" value="Putative methyltransferase TM0872, insert domain"/>
    <property type="match status" value="1"/>
</dbReference>
<dbReference type="Gene3D" id="3.40.50.150">
    <property type="entry name" value="Vaccinia Virus protein VP39"/>
    <property type="match status" value="1"/>
</dbReference>
<dbReference type="HAMAP" id="MF_01007">
    <property type="entry name" value="16SrRNA_methyltr_H"/>
    <property type="match status" value="1"/>
</dbReference>
<dbReference type="InterPro" id="IPR002903">
    <property type="entry name" value="RsmH"/>
</dbReference>
<dbReference type="InterPro" id="IPR023397">
    <property type="entry name" value="SAM-dep_MeTrfase_MraW_recog"/>
</dbReference>
<dbReference type="InterPro" id="IPR029063">
    <property type="entry name" value="SAM-dependent_MTases_sf"/>
</dbReference>
<dbReference type="NCBIfam" id="TIGR00006">
    <property type="entry name" value="16S rRNA (cytosine(1402)-N(4))-methyltransferase RsmH"/>
    <property type="match status" value="1"/>
</dbReference>
<dbReference type="PANTHER" id="PTHR11265:SF0">
    <property type="entry name" value="12S RRNA N4-METHYLCYTIDINE METHYLTRANSFERASE"/>
    <property type="match status" value="1"/>
</dbReference>
<dbReference type="PANTHER" id="PTHR11265">
    <property type="entry name" value="S-ADENOSYL-METHYLTRANSFERASE MRAW"/>
    <property type="match status" value="1"/>
</dbReference>
<dbReference type="Pfam" id="PF01795">
    <property type="entry name" value="Methyltransf_5"/>
    <property type="match status" value="1"/>
</dbReference>
<dbReference type="PIRSF" id="PIRSF004486">
    <property type="entry name" value="MraW"/>
    <property type="match status" value="1"/>
</dbReference>
<dbReference type="SUPFAM" id="SSF81799">
    <property type="entry name" value="Putative methyltransferase TM0872, insert domain"/>
    <property type="match status" value="1"/>
</dbReference>
<dbReference type="SUPFAM" id="SSF53335">
    <property type="entry name" value="S-adenosyl-L-methionine-dependent methyltransferases"/>
    <property type="match status" value="1"/>
</dbReference>
<organism>
    <name type="scientific">Mesorhizobium japonicum (strain LMG 29417 / CECT 9101 / MAFF 303099)</name>
    <name type="common">Mesorhizobium loti (strain MAFF 303099)</name>
    <dbReference type="NCBI Taxonomy" id="266835"/>
    <lineage>
        <taxon>Bacteria</taxon>
        <taxon>Pseudomonadati</taxon>
        <taxon>Pseudomonadota</taxon>
        <taxon>Alphaproteobacteria</taxon>
        <taxon>Hyphomicrobiales</taxon>
        <taxon>Phyllobacteriaceae</taxon>
        <taxon>Mesorhizobium</taxon>
    </lineage>
</organism>